<sequence length="244" mass="28638">MEAAQAFENLANLEQEFGKAEIEILKKQNELFQPLFEQRRDILKTINNFWVVVLEAAGDEISQYITPEDSVLLEKLENIYVERFNEKEPRDVRISLTFQPNEYLQDDNLTLVKEVRIKEEKAKDDEGLEKKITKYTSQPVDIHWKPGKSLFRKNKKLPPNFFDYFQWTGEEEDDDFDGATLTIFLAEDLFPNAVKYFTEAMTEEASDEDESVDLEEDEEEEDEEDEEGDEEKQEPPSKKSKKSN</sequence>
<gene>
    <name type="ORF">SPBC36B7.08c</name>
</gene>
<comment type="subcellular location">
    <subcellularLocation>
        <location evidence="3">Nucleus</location>
    </subcellularLocation>
</comment>
<comment type="similarity">
    <text evidence="3">Belongs to the nucleosome assembly protein (NAP) family.</text>
</comment>
<organism>
    <name type="scientific">Schizosaccharomyces pombe (strain 972 / ATCC 24843)</name>
    <name type="common">Fission yeast</name>
    <dbReference type="NCBI Taxonomy" id="284812"/>
    <lineage>
        <taxon>Eukaryota</taxon>
        <taxon>Fungi</taxon>
        <taxon>Dikarya</taxon>
        <taxon>Ascomycota</taxon>
        <taxon>Taphrinomycotina</taxon>
        <taxon>Schizosaccharomycetes</taxon>
        <taxon>Schizosaccharomycetales</taxon>
        <taxon>Schizosaccharomycetaceae</taxon>
        <taxon>Schizosaccharomyces</taxon>
    </lineage>
</organism>
<keyword id="KW-0002">3D-structure</keyword>
<keyword id="KW-0539">Nucleus</keyword>
<keyword id="KW-0597">Phosphoprotein</keyword>
<keyword id="KW-1185">Reference proteome</keyword>
<protein>
    <recommendedName>
        <fullName>Putative nucleosome assembly protein C36B7.08c</fullName>
    </recommendedName>
</protein>
<proteinExistence type="evidence at protein level"/>
<name>YO48_SCHPO</name>
<feature type="chain" id="PRO_0000317135" description="Putative nucleosome assembly protein C36B7.08c">
    <location>
        <begin position="1"/>
        <end position="244"/>
    </location>
</feature>
<feature type="region of interest" description="Disordered" evidence="1">
    <location>
        <begin position="199"/>
        <end position="244"/>
    </location>
</feature>
<feature type="compositionally biased region" description="Acidic residues" evidence="1">
    <location>
        <begin position="201"/>
        <end position="232"/>
    </location>
</feature>
<feature type="modified residue" description="Phosphoserine" evidence="2">
    <location>
        <position position="211"/>
    </location>
</feature>
<feature type="helix" evidence="4">
    <location>
        <begin position="3"/>
        <end position="43"/>
    </location>
</feature>
<feature type="helix" evidence="4">
    <location>
        <begin position="49"/>
        <end position="56"/>
    </location>
</feature>
<feature type="helix" evidence="4">
    <location>
        <begin position="59"/>
        <end position="62"/>
    </location>
</feature>
<feature type="helix" evidence="4">
    <location>
        <begin position="67"/>
        <end position="73"/>
    </location>
</feature>
<feature type="strand" evidence="4">
    <location>
        <begin position="76"/>
        <end position="82"/>
    </location>
</feature>
<feature type="strand" evidence="4">
    <location>
        <begin position="92"/>
        <end position="98"/>
    </location>
</feature>
<feature type="strand" evidence="4">
    <location>
        <begin position="102"/>
        <end position="104"/>
    </location>
</feature>
<feature type="helix" evidence="4">
    <location>
        <begin position="106"/>
        <end position="108"/>
    </location>
</feature>
<feature type="strand" evidence="4">
    <location>
        <begin position="110"/>
        <end position="123"/>
    </location>
</feature>
<feature type="strand" evidence="4">
    <location>
        <begin position="129"/>
        <end position="137"/>
    </location>
</feature>
<feature type="strand" evidence="4">
    <location>
        <begin position="153"/>
        <end position="155"/>
    </location>
</feature>
<feature type="helix" evidence="4">
    <location>
        <begin position="161"/>
        <end position="166"/>
    </location>
</feature>
<feature type="helix" evidence="4">
    <location>
        <begin position="178"/>
        <end position="187"/>
    </location>
</feature>
<feature type="turn" evidence="4">
    <location>
        <begin position="188"/>
        <end position="192"/>
    </location>
</feature>
<feature type="helix" evidence="4">
    <location>
        <begin position="193"/>
        <end position="206"/>
    </location>
</feature>
<dbReference type="EMBL" id="CU329671">
    <property type="protein sequence ID" value="CAC05729.1"/>
    <property type="molecule type" value="Genomic_DNA"/>
</dbReference>
<dbReference type="RefSeq" id="NP_595990.1">
    <property type="nucleotide sequence ID" value="NM_001021897.2"/>
</dbReference>
<dbReference type="PDB" id="5GPK">
    <property type="method" value="X-ray"/>
    <property type="resolution" value="2.10 A"/>
    <property type="chains" value="A/B=1-244"/>
</dbReference>
<dbReference type="PDB" id="5GPL">
    <property type="method" value="X-ray"/>
    <property type="resolution" value="2.10 A"/>
    <property type="chains" value="A/B=1-244"/>
</dbReference>
<dbReference type="PDBsum" id="5GPK"/>
<dbReference type="PDBsum" id="5GPL"/>
<dbReference type="SMR" id="Q9HGN2"/>
<dbReference type="BioGRID" id="277483">
    <property type="interactions" value="160"/>
</dbReference>
<dbReference type="FunCoup" id="Q9HGN2">
    <property type="interactions" value="146"/>
</dbReference>
<dbReference type="STRING" id="284812.Q9HGN2"/>
<dbReference type="iPTMnet" id="Q9HGN2"/>
<dbReference type="PaxDb" id="4896-SPBC36B7.08c.1"/>
<dbReference type="EnsemblFungi" id="SPBC36B7.08c.1">
    <property type="protein sequence ID" value="SPBC36B7.08c.1:pep"/>
    <property type="gene ID" value="SPBC36B7.08c"/>
</dbReference>
<dbReference type="PomBase" id="SPBC36B7.08c"/>
<dbReference type="VEuPathDB" id="FungiDB:SPBC36B7.08c"/>
<dbReference type="eggNOG" id="KOG1508">
    <property type="taxonomic scope" value="Eukaryota"/>
</dbReference>
<dbReference type="HOGENOM" id="CLU_072852_0_0_1"/>
<dbReference type="InParanoid" id="Q9HGN2"/>
<dbReference type="OMA" id="PGKEFPN"/>
<dbReference type="PhylomeDB" id="Q9HGN2"/>
<dbReference type="PRO" id="PR:Q9HGN2"/>
<dbReference type="Proteomes" id="UP000002485">
    <property type="component" value="Chromosome II"/>
</dbReference>
<dbReference type="GO" id="GO:0061638">
    <property type="term" value="C:CENP-A containing chromatin"/>
    <property type="evidence" value="ECO:0000269"/>
    <property type="project" value="PomBase"/>
</dbReference>
<dbReference type="GO" id="GO:0000785">
    <property type="term" value="C:chromatin"/>
    <property type="evidence" value="ECO:0000314"/>
    <property type="project" value="PomBase"/>
</dbReference>
<dbReference type="GO" id="GO:0000775">
    <property type="term" value="C:chromosome, centromeric region"/>
    <property type="evidence" value="ECO:0000314"/>
    <property type="project" value="PomBase"/>
</dbReference>
<dbReference type="GO" id="GO:0005654">
    <property type="term" value="C:nucleoplasm"/>
    <property type="evidence" value="ECO:0000314"/>
    <property type="project" value="PomBase"/>
</dbReference>
<dbReference type="GO" id="GO:0005634">
    <property type="term" value="C:nucleus"/>
    <property type="evidence" value="ECO:0000318"/>
    <property type="project" value="GO_Central"/>
</dbReference>
<dbReference type="GO" id="GO:0003682">
    <property type="term" value="F:chromatin binding"/>
    <property type="evidence" value="ECO:0000318"/>
    <property type="project" value="GO_Central"/>
</dbReference>
<dbReference type="GO" id="GO:0042393">
    <property type="term" value="F:histone binding"/>
    <property type="evidence" value="ECO:0000318"/>
    <property type="project" value="GO_Central"/>
</dbReference>
<dbReference type="GO" id="GO:0140713">
    <property type="term" value="F:histone chaperone activity"/>
    <property type="evidence" value="ECO:0000353"/>
    <property type="project" value="PomBase"/>
</dbReference>
<dbReference type="GO" id="GO:0140898">
    <property type="term" value="P:CENP-A eviction from euchromatin"/>
    <property type="evidence" value="ECO:0000269"/>
    <property type="project" value="PomBase"/>
</dbReference>
<dbReference type="GO" id="GO:0006334">
    <property type="term" value="P:nucleosome assembly"/>
    <property type="evidence" value="ECO:0007669"/>
    <property type="project" value="InterPro"/>
</dbReference>
<dbReference type="Gene3D" id="3.30.1120.90">
    <property type="entry name" value="Nucleosome assembly protein"/>
    <property type="match status" value="1"/>
</dbReference>
<dbReference type="InterPro" id="IPR037231">
    <property type="entry name" value="NAP-like_sf"/>
</dbReference>
<dbReference type="InterPro" id="IPR002164">
    <property type="entry name" value="NAP_family"/>
</dbReference>
<dbReference type="PANTHER" id="PTHR11875">
    <property type="entry name" value="TESTIS-SPECIFIC Y-ENCODED PROTEIN"/>
    <property type="match status" value="1"/>
</dbReference>
<dbReference type="Pfam" id="PF00956">
    <property type="entry name" value="NAP"/>
    <property type="match status" value="1"/>
</dbReference>
<dbReference type="SUPFAM" id="SSF143113">
    <property type="entry name" value="NAP-like"/>
    <property type="match status" value="1"/>
</dbReference>
<accession>Q9HGN2</accession>
<reference key="1">
    <citation type="journal article" date="2002" name="Nature">
        <title>The genome sequence of Schizosaccharomyces pombe.</title>
        <authorList>
            <person name="Wood V."/>
            <person name="Gwilliam R."/>
            <person name="Rajandream M.A."/>
            <person name="Lyne M.H."/>
            <person name="Lyne R."/>
            <person name="Stewart A."/>
            <person name="Sgouros J.G."/>
            <person name="Peat N."/>
            <person name="Hayles J."/>
            <person name="Baker S.G."/>
            <person name="Basham D."/>
            <person name="Bowman S."/>
            <person name="Brooks K."/>
            <person name="Brown D."/>
            <person name="Brown S."/>
            <person name="Chillingworth T."/>
            <person name="Churcher C.M."/>
            <person name="Collins M."/>
            <person name="Connor R."/>
            <person name="Cronin A."/>
            <person name="Davis P."/>
            <person name="Feltwell T."/>
            <person name="Fraser A."/>
            <person name="Gentles S."/>
            <person name="Goble A."/>
            <person name="Hamlin N."/>
            <person name="Harris D.E."/>
            <person name="Hidalgo J."/>
            <person name="Hodgson G."/>
            <person name="Holroyd S."/>
            <person name="Hornsby T."/>
            <person name="Howarth S."/>
            <person name="Huckle E.J."/>
            <person name="Hunt S."/>
            <person name="Jagels K."/>
            <person name="James K.D."/>
            <person name="Jones L."/>
            <person name="Jones M."/>
            <person name="Leather S."/>
            <person name="McDonald S."/>
            <person name="McLean J."/>
            <person name="Mooney P."/>
            <person name="Moule S."/>
            <person name="Mungall K.L."/>
            <person name="Murphy L.D."/>
            <person name="Niblett D."/>
            <person name="Odell C."/>
            <person name="Oliver K."/>
            <person name="O'Neil S."/>
            <person name="Pearson D."/>
            <person name="Quail M.A."/>
            <person name="Rabbinowitsch E."/>
            <person name="Rutherford K.M."/>
            <person name="Rutter S."/>
            <person name="Saunders D."/>
            <person name="Seeger K."/>
            <person name="Sharp S."/>
            <person name="Skelton J."/>
            <person name="Simmonds M.N."/>
            <person name="Squares R."/>
            <person name="Squares S."/>
            <person name="Stevens K."/>
            <person name="Taylor K."/>
            <person name="Taylor R.G."/>
            <person name="Tivey A."/>
            <person name="Walsh S.V."/>
            <person name="Warren T."/>
            <person name="Whitehead S."/>
            <person name="Woodward J.R."/>
            <person name="Volckaert G."/>
            <person name="Aert R."/>
            <person name="Robben J."/>
            <person name="Grymonprez B."/>
            <person name="Weltjens I."/>
            <person name="Vanstreels E."/>
            <person name="Rieger M."/>
            <person name="Schaefer M."/>
            <person name="Mueller-Auer S."/>
            <person name="Gabel C."/>
            <person name="Fuchs M."/>
            <person name="Duesterhoeft A."/>
            <person name="Fritzc C."/>
            <person name="Holzer E."/>
            <person name="Moestl D."/>
            <person name="Hilbert H."/>
            <person name="Borzym K."/>
            <person name="Langer I."/>
            <person name="Beck A."/>
            <person name="Lehrach H."/>
            <person name="Reinhardt R."/>
            <person name="Pohl T.M."/>
            <person name="Eger P."/>
            <person name="Zimmermann W."/>
            <person name="Wedler H."/>
            <person name="Wambutt R."/>
            <person name="Purnelle B."/>
            <person name="Goffeau A."/>
            <person name="Cadieu E."/>
            <person name="Dreano S."/>
            <person name="Gloux S."/>
            <person name="Lelaure V."/>
            <person name="Mottier S."/>
            <person name="Galibert F."/>
            <person name="Aves S.J."/>
            <person name="Xiang Z."/>
            <person name="Hunt C."/>
            <person name="Moore K."/>
            <person name="Hurst S.M."/>
            <person name="Lucas M."/>
            <person name="Rochet M."/>
            <person name="Gaillardin C."/>
            <person name="Tallada V.A."/>
            <person name="Garzon A."/>
            <person name="Thode G."/>
            <person name="Daga R.R."/>
            <person name="Cruzado L."/>
            <person name="Jimenez J."/>
            <person name="Sanchez M."/>
            <person name="del Rey F."/>
            <person name="Benito J."/>
            <person name="Dominguez A."/>
            <person name="Revuelta J.L."/>
            <person name="Moreno S."/>
            <person name="Armstrong J."/>
            <person name="Forsburg S.L."/>
            <person name="Cerutti L."/>
            <person name="Lowe T."/>
            <person name="McCombie W.R."/>
            <person name="Paulsen I."/>
            <person name="Potashkin J."/>
            <person name="Shpakovski G.V."/>
            <person name="Ussery D."/>
            <person name="Barrell B.G."/>
            <person name="Nurse P."/>
        </authorList>
    </citation>
    <scope>NUCLEOTIDE SEQUENCE [LARGE SCALE GENOMIC DNA]</scope>
    <source>
        <strain>972 / ATCC 24843</strain>
    </source>
</reference>
<reference key="2">
    <citation type="journal article" date="2008" name="J. Proteome Res.">
        <title>Phosphoproteome analysis of fission yeast.</title>
        <authorList>
            <person name="Wilson-Grady J.T."/>
            <person name="Villen J."/>
            <person name="Gygi S.P."/>
        </authorList>
    </citation>
    <scope>PHOSPHORYLATION [LARGE SCALE ANALYSIS] AT SER-211</scope>
    <scope>IDENTIFICATION BY MASS SPECTROMETRY</scope>
</reference>
<evidence type="ECO:0000256" key="1">
    <source>
        <dbReference type="SAM" id="MobiDB-lite"/>
    </source>
</evidence>
<evidence type="ECO:0000269" key="2">
    <source>
    </source>
</evidence>
<evidence type="ECO:0000305" key="3"/>
<evidence type="ECO:0007829" key="4">
    <source>
        <dbReference type="PDB" id="5GPL"/>
    </source>
</evidence>